<accession>B0RU73</accession>
<proteinExistence type="inferred from homology"/>
<keyword id="KW-0687">Ribonucleoprotein</keyword>
<keyword id="KW-0689">Ribosomal protein</keyword>
<keyword id="KW-0694">RNA-binding</keyword>
<keyword id="KW-0699">rRNA-binding</keyword>
<reference key="1">
    <citation type="journal article" date="2008" name="J. Biotechnol.">
        <title>The genome of Xanthomonas campestris pv. campestris B100 and its use for the reconstruction of metabolic pathways involved in xanthan biosynthesis.</title>
        <authorList>
            <person name="Vorhoelter F.-J."/>
            <person name="Schneiker S."/>
            <person name="Goesmann A."/>
            <person name="Krause L."/>
            <person name="Bekel T."/>
            <person name="Kaiser O."/>
            <person name="Linke B."/>
            <person name="Patschkowski T."/>
            <person name="Rueckert C."/>
            <person name="Schmid J."/>
            <person name="Sidhu V.K."/>
            <person name="Sieber V."/>
            <person name="Tauch A."/>
            <person name="Watt S.A."/>
            <person name="Weisshaar B."/>
            <person name="Becker A."/>
            <person name="Niehaus K."/>
            <person name="Puehler A."/>
        </authorList>
    </citation>
    <scope>NUCLEOTIDE SEQUENCE [LARGE SCALE GENOMIC DNA]</scope>
    <source>
        <strain>B100</strain>
    </source>
</reference>
<sequence>MSDNNEKQTLRTVEGRVVSNKMDKTVTVLVERQVKHPLYGKYIKRSSKLHAHDADNACNEGDVVRVTEIAPMSKTKNWRVVEIVSRAAV</sequence>
<comment type="function">
    <text evidence="1">One of the primary rRNA binding proteins, it binds specifically to the 5'-end of 16S ribosomal RNA.</text>
</comment>
<comment type="subunit">
    <text evidence="1">Part of the 30S ribosomal subunit.</text>
</comment>
<comment type="similarity">
    <text evidence="1">Belongs to the universal ribosomal protein uS17 family.</text>
</comment>
<dbReference type="EMBL" id="AM920689">
    <property type="protein sequence ID" value="CAP52815.1"/>
    <property type="molecule type" value="Genomic_DNA"/>
</dbReference>
<dbReference type="SMR" id="B0RU73"/>
<dbReference type="KEGG" id="xca:xcc-b100_3450"/>
<dbReference type="HOGENOM" id="CLU_073626_1_1_6"/>
<dbReference type="Proteomes" id="UP000001188">
    <property type="component" value="Chromosome"/>
</dbReference>
<dbReference type="GO" id="GO:0022627">
    <property type="term" value="C:cytosolic small ribosomal subunit"/>
    <property type="evidence" value="ECO:0007669"/>
    <property type="project" value="TreeGrafter"/>
</dbReference>
<dbReference type="GO" id="GO:0019843">
    <property type="term" value="F:rRNA binding"/>
    <property type="evidence" value="ECO:0007669"/>
    <property type="project" value="UniProtKB-UniRule"/>
</dbReference>
<dbReference type="GO" id="GO:0003735">
    <property type="term" value="F:structural constituent of ribosome"/>
    <property type="evidence" value="ECO:0007669"/>
    <property type="project" value="InterPro"/>
</dbReference>
<dbReference type="GO" id="GO:0006412">
    <property type="term" value="P:translation"/>
    <property type="evidence" value="ECO:0007669"/>
    <property type="project" value="UniProtKB-UniRule"/>
</dbReference>
<dbReference type="CDD" id="cd00364">
    <property type="entry name" value="Ribosomal_uS17"/>
    <property type="match status" value="1"/>
</dbReference>
<dbReference type="FunFam" id="2.40.50.140:FF:000204">
    <property type="entry name" value="30S ribosomal protein S17"/>
    <property type="match status" value="1"/>
</dbReference>
<dbReference type="Gene3D" id="2.40.50.140">
    <property type="entry name" value="Nucleic acid-binding proteins"/>
    <property type="match status" value="1"/>
</dbReference>
<dbReference type="HAMAP" id="MF_01345_B">
    <property type="entry name" value="Ribosomal_uS17_B"/>
    <property type="match status" value="1"/>
</dbReference>
<dbReference type="InterPro" id="IPR012340">
    <property type="entry name" value="NA-bd_OB-fold"/>
</dbReference>
<dbReference type="InterPro" id="IPR000266">
    <property type="entry name" value="Ribosomal_uS17"/>
</dbReference>
<dbReference type="InterPro" id="IPR019984">
    <property type="entry name" value="Ribosomal_uS17_bact/chlr"/>
</dbReference>
<dbReference type="NCBIfam" id="NF004123">
    <property type="entry name" value="PRK05610.1"/>
    <property type="match status" value="1"/>
</dbReference>
<dbReference type="NCBIfam" id="TIGR03635">
    <property type="entry name" value="uS17_bact"/>
    <property type="match status" value="1"/>
</dbReference>
<dbReference type="PANTHER" id="PTHR10744">
    <property type="entry name" value="40S RIBOSOMAL PROTEIN S11 FAMILY MEMBER"/>
    <property type="match status" value="1"/>
</dbReference>
<dbReference type="PANTHER" id="PTHR10744:SF1">
    <property type="entry name" value="SMALL RIBOSOMAL SUBUNIT PROTEIN US17M"/>
    <property type="match status" value="1"/>
</dbReference>
<dbReference type="Pfam" id="PF00366">
    <property type="entry name" value="Ribosomal_S17"/>
    <property type="match status" value="1"/>
</dbReference>
<dbReference type="PRINTS" id="PR00973">
    <property type="entry name" value="RIBOSOMALS17"/>
</dbReference>
<dbReference type="SUPFAM" id="SSF50249">
    <property type="entry name" value="Nucleic acid-binding proteins"/>
    <property type="match status" value="1"/>
</dbReference>
<feature type="chain" id="PRO_1000143322" description="Small ribosomal subunit protein uS17">
    <location>
        <begin position="1"/>
        <end position="89"/>
    </location>
</feature>
<name>RS17_XANCB</name>
<protein>
    <recommendedName>
        <fullName evidence="1">Small ribosomal subunit protein uS17</fullName>
    </recommendedName>
    <alternativeName>
        <fullName evidence="2">30S ribosomal protein S17</fullName>
    </alternativeName>
</protein>
<evidence type="ECO:0000255" key="1">
    <source>
        <dbReference type="HAMAP-Rule" id="MF_01345"/>
    </source>
</evidence>
<evidence type="ECO:0000305" key="2"/>
<organism>
    <name type="scientific">Xanthomonas campestris pv. campestris (strain B100)</name>
    <dbReference type="NCBI Taxonomy" id="509169"/>
    <lineage>
        <taxon>Bacteria</taxon>
        <taxon>Pseudomonadati</taxon>
        <taxon>Pseudomonadota</taxon>
        <taxon>Gammaproteobacteria</taxon>
        <taxon>Lysobacterales</taxon>
        <taxon>Lysobacteraceae</taxon>
        <taxon>Xanthomonas</taxon>
    </lineage>
</organism>
<gene>
    <name evidence="1" type="primary">rpsQ</name>
    <name type="ordered locus">xcc-b100_3450</name>
</gene>